<sequence>MAARPLVTVYDEKYEATQSQIRLPAVFRTPIRPDLVSFIADQVRRNRRQAHAVNTKAGKQHSAESWGTGRAVARIPRVRGGGTHRSGQGAFGNMCRGGHMFAPLKVFRRWHRNVNIAQKRYAVSSAIAASGIPALLQARGHVIDQVAEVPLVVSDKVESFRKTKEAVVFLRRSHLWADIEKVYNSKRNRAGKGKLRNRQHKQKLGPVVIYGQDAECARAFRNIPGVDVMNVERLNLLKLAPGGHLGRLIIWTESAFKKLDTIYGTTVANSSQLKKGWSVPLPIMANSDFSRIIRSEEVVKAIRAPKKNPVLPKVHRNPLKKRTLLYKLNPYASILRKASKANVKK</sequence>
<evidence type="ECO:0000269" key="1">
    <source ref="2"/>
</evidence>
<evidence type="ECO:0000305" key="2"/>
<name>RL4_CAEEL</name>
<feature type="initiator methionine" description="Removed" evidence="1">
    <location>
        <position position="1"/>
    </location>
</feature>
<feature type="chain" id="PRO_0000129358" description="Large ribosomal subunit protein uL4">
    <location>
        <begin position="2"/>
        <end position="345"/>
    </location>
</feature>
<feature type="modified residue" description="N-acetylalanine" evidence="1">
    <location>
        <position position="2"/>
    </location>
</feature>
<keyword id="KW-0002">3D-structure</keyword>
<keyword id="KW-0007">Acetylation</keyword>
<keyword id="KW-0903">Direct protein sequencing</keyword>
<keyword id="KW-1185">Reference proteome</keyword>
<keyword id="KW-0687">Ribonucleoprotein</keyword>
<keyword id="KW-0689">Ribosomal protein</keyword>
<organism>
    <name type="scientific">Caenorhabditis elegans</name>
    <dbReference type="NCBI Taxonomy" id="6239"/>
    <lineage>
        <taxon>Eukaryota</taxon>
        <taxon>Metazoa</taxon>
        <taxon>Ecdysozoa</taxon>
        <taxon>Nematoda</taxon>
        <taxon>Chromadorea</taxon>
        <taxon>Rhabditida</taxon>
        <taxon>Rhabditina</taxon>
        <taxon>Rhabditomorpha</taxon>
        <taxon>Rhabditoidea</taxon>
        <taxon>Rhabditidae</taxon>
        <taxon>Peloderinae</taxon>
        <taxon>Caenorhabditis</taxon>
    </lineage>
</organism>
<reference key="1">
    <citation type="journal article" date="1998" name="Science">
        <title>Genome sequence of the nematode C. elegans: a platform for investigating biology.</title>
        <authorList>
            <consortium name="The C. elegans sequencing consortium"/>
        </authorList>
    </citation>
    <scope>NUCLEOTIDE SEQUENCE [LARGE SCALE GENOMIC DNA]</scope>
    <source>
        <strain>Bristol N2</strain>
    </source>
</reference>
<reference key="2">
    <citation type="submission" date="2005-08" db="UniProtKB">
        <authorList>
            <person name="Bienvenut W.V."/>
        </authorList>
    </citation>
    <scope>PROTEIN SEQUENCE OF 2-22; 29-44; 86-96; 113-119; 140-161; 173-181; 204-218; 222-233; 239-291 AND 328-336</scope>
    <scope>IDENTIFICATION BY MASS SPECTROMETRY</scope>
    <scope>ACETYLATION AT ALA-2</scope>
</reference>
<accession>O02056</accession>
<proteinExistence type="evidence at protein level"/>
<comment type="similarity">
    <text evidence="2">Belongs to the universal ribosomal protein uL4 family.</text>
</comment>
<dbReference type="EMBL" id="FO080106">
    <property type="protein sequence ID" value="CCD61249.1"/>
    <property type="molecule type" value="Genomic_DNA"/>
</dbReference>
<dbReference type="PIR" id="T34031">
    <property type="entry name" value="T34031"/>
</dbReference>
<dbReference type="RefSeq" id="NP_491416.1">
    <property type="nucleotide sequence ID" value="NM_059015.8"/>
</dbReference>
<dbReference type="PDB" id="9BH5">
    <property type="method" value="EM"/>
    <property type="resolution" value="2.63 A"/>
    <property type="chains" value="CC=1-345"/>
</dbReference>
<dbReference type="PDB" id="9CAI">
    <property type="method" value="EM"/>
    <property type="resolution" value="2.59 A"/>
    <property type="chains" value="CC=1-345"/>
</dbReference>
<dbReference type="PDBsum" id="9BH5"/>
<dbReference type="PDBsum" id="9CAI"/>
<dbReference type="EMDB" id="EMD-44533"/>
<dbReference type="EMDB" id="EMD-45392"/>
<dbReference type="SMR" id="O02056"/>
<dbReference type="BioGRID" id="37538">
    <property type="interactions" value="104"/>
</dbReference>
<dbReference type="DIP" id="DIP-26846N"/>
<dbReference type="FunCoup" id="O02056">
    <property type="interactions" value="1868"/>
</dbReference>
<dbReference type="IntAct" id="O02056">
    <property type="interactions" value="5"/>
</dbReference>
<dbReference type="STRING" id="6239.B0041.4.1"/>
<dbReference type="iPTMnet" id="O02056"/>
<dbReference type="PaxDb" id="6239-B0041.4"/>
<dbReference type="PeptideAtlas" id="O02056"/>
<dbReference type="EnsemblMetazoa" id="B0041.4.1">
    <property type="protein sequence ID" value="B0041.4.1"/>
    <property type="gene ID" value="WBGene00004415"/>
</dbReference>
<dbReference type="GeneID" id="172074"/>
<dbReference type="KEGG" id="cel:CELE_B0041.4"/>
<dbReference type="UCSC" id="B0041.4.1">
    <property type="organism name" value="c. elegans"/>
</dbReference>
<dbReference type="AGR" id="WB:WBGene00004415"/>
<dbReference type="CTD" id="172074"/>
<dbReference type="WormBase" id="B0041.4">
    <property type="protein sequence ID" value="CE07669"/>
    <property type="gene ID" value="WBGene00004415"/>
    <property type="gene designation" value="rpl-4"/>
</dbReference>
<dbReference type="eggNOG" id="KOG1475">
    <property type="taxonomic scope" value="Eukaryota"/>
</dbReference>
<dbReference type="GeneTree" id="ENSGT00390000018145"/>
<dbReference type="HOGENOM" id="CLU_026535_4_0_1"/>
<dbReference type="InParanoid" id="O02056"/>
<dbReference type="OMA" id="ALYGTWR"/>
<dbReference type="OrthoDB" id="10259785at2759"/>
<dbReference type="PhylomeDB" id="O02056"/>
<dbReference type="Reactome" id="R-CEL-156827">
    <property type="pathway name" value="L13a-mediated translational silencing of Ceruloplasmin expression"/>
</dbReference>
<dbReference type="Reactome" id="R-CEL-1799339">
    <property type="pathway name" value="SRP-dependent cotranslational protein targeting to membrane"/>
</dbReference>
<dbReference type="Reactome" id="R-CEL-72689">
    <property type="pathway name" value="Formation of a pool of free 40S subunits"/>
</dbReference>
<dbReference type="Reactome" id="R-CEL-72706">
    <property type="pathway name" value="GTP hydrolysis and joining of the 60S ribosomal subunit"/>
</dbReference>
<dbReference type="Reactome" id="R-CEL-975956">
    <property type="pathway name" value="Nonsense Mediated Decay (NMD) independent of the Exon Junction Complex (EJC)"/>
</dbReference>
<dbReference type="Reactome" id="R-CEL-975957">
    <property type="pathway name" value="Nonsense Mediated Decay (NMD) enhanced by the Exon Junction Complex (EJC)"/>
</dbReference>
<dbReference type="PRO" id="PR:O02056"/>
<dbReference type="Proteomes" id="UP000001940">
    <property type="component" value="Chromosome I"/>
</dbReference>
<dbReference type="Bgee" id="WBGene00004415">
    <property type="expression patterns" value="Expressed in larva and 4 other cell types or tissues"/>
</dbReference>
<dbReference type="GO" id="GO:0022625">
    <property type="term" value="C:cytosolic large ribosomal subunit"/>
    <property type="evidence" value="ECO:0000318"/>
    <property type="project" value="GO_Central"/>
</dbReference>
<dbReference type="GO" id="GO:0003723">
    <property type="term" value="F:RNA binding"/>
    <property type="evidence" value="ECO:0000318"/>
    <property type="project" value="GO_Central"/>
</dbReference>
<dbReference type="GO" id="GO:0003735">
    <property type="term" value="F:structural constituent of ribosome"/>
    <property type="evidence" value="ECO:0000318"/>
    <property type="project" value="GO_Central"/>
</dbReference>
<dbReference type="GO" id="GO:0008340">
    <property type="term" value="P:determination of adult lifespan"/>
    <property type="evidence" value="ECO:0000315"/>
    <property type="project" value="WormBase"/>
</dbReference>
<dbReference type="GO" id="GO:0006412">
    <property type="term" value="P:translation"/>
    <property type="evidence" value="ECO:0007669"/>
    <property type="project" value="InterPro"/>
</dbReference>
<dbReference type="FunFam" id="3.40.1370.10:FF:000002">
    <property type="entry name" value="60S ribosomal protein L4"/>
    <property type="match status" value="1"/>
</dbReference>
<dbReference type="Gene3D" id="3.40.1370.10">
    <property type="match status" value="1"/>
</dbReference>
<dbReference type="InterPro" id="IPR025755">
    <property type="entry name" value="Ribos_uL4_C_dom"/>
</dbReference>
<dbReference type="InterPro" id="IPR002136">
    <property type="entry name" value="Ribosomal_uL4"/>
</dbReference>
<dbReference type="InterPro" id="IPR023574">
    <property type="entry name" value="Ribosomal_uL4_dom_sf"/>
</dbReference>
<dbReference type="InterPro" id="IPR013000">
    <property type="entry name" value="Ribosomal_uL4_euk/arc_CS"/>
</dbReference>
<dbReference type="InterPro" id="IPR045240">
    <property type="entry name" value="Ribosomal_uL4_euk/arch"/>
</dbReference>
<dbReference type="PANTHER" id="PTHR19431">
    <property type="entry name" value="60S RIBOSOMAL PROTEIN L4"/>
    <property type="match status" value="1"/>
</dbReference>
<dbReference type="Pfam" id="PF14374">
    <property type="entry name" value="Ribos_L4_asso_C"/>
    <property type="match status" value="1"/>
</dbReference>
<dbReference type="Pfam" id="PF00573">
    <property type="entry name" value="Ribosomal_L4"/>
    <property type="match status" value="1"/>
</dbReference>
<dbReference type="SUPFAM" id="SSF52166">
    <property type="entry name" value="Ribosomal protein L4"/>
    <property type="match status" value="1"/>
</dbReference>
<dbReference type="PROSITE" id="PS00939">
    <property type="entry name" value="RIBOSOMAL_L1E"/>
    <property type="match status" value="1"/>
</dbReference>
<protein>
    <recommendedName>
        <fullName evidence="2">Large ribosomal subunit protein uL4</fullName>
    </recommendedName>
    <alternativeName>
        <fullName>60S ribosomal protein L4</fullName>
    </alternativeName>
</protein>
<gene>
    <name type="primary">rpl-4</name>
    <name type="ORF">B0041.4</name>
</gene>